<evidence type="ECO:0000255" key="1">
    <source>
        <dbReference type="HAMAP-Rule" id="MF_00274"/>
    </source>
</evidence>
<protein>
    <recommendedName>
        <fullName evidence="1">Nucleoid-associated protein MGAS9429_Spy1585</fullName>
    </recommendedName>
</protein>
<accession>Q1JK51</accession>
<reference key="1">
    <citation type="journal article" date="2006" name="Proc. Natl. Acad. Sci. U.S.A.">
        <title>Molecular genetic anatomy of inter- and intraserotype variation in the human bacterial pathogen group A Streptococcus.</title>
        <authorList>
            <person name="Beres S.B."/>
            <person name="Richter E.W."/>
            <person name="Nagiec M.J."/>
            <person name="Sumby P."/>
            <person name="Porcella S.F."/>
            <person name="DeLeo F.R."/>
            <person name="Musser J.M."/>
        </authorList>
    </citation>
    <scope>NUCLEOTIDE SEQUENCE [LARGE SCALE GENOMIC DNA]</scope>
    <source>
        <strain>MGAS9429</strain>
    </source>
</reference>
<dbReference type="EMBL" id="CP000259">
    <property type="protein sequence ID" value="ABF32772.1"/>
    <property type="molecule type" value="Genomic_DNA"/>
</dbReference>
<dbReference type="RefSeq" id="WP_002988205.1">
    <property type="nucleotide sequence ID" value="NC_008021.1"/>
</dbReference>
<dbReference type="SMR" id="Q1JK51"/>
<dbReference type="KEGG" id="spk:MGAS9429_Spy1585"/>
<dbReference type="HOGENOM" id="CLU_140930_1_1_9"/>
<dbReference type="Proteomes" id="UP000002433">
    <property type="component" value="Chromosome"/>
</dbReference>
<dbReference type="GO" id="GO:0043590">
    <property type="term" value="C:bacterial nucleoid"/>
    <property type="evidence" value="ECO:0007669"/>
    <property type="project" value="UniProtKB-UniRule"/>
</dbReference>
<dbReference type="GO" id="GO:0005829">
    <property type="term" value="C:cytosol"/>
    <property type="evidence" value="ECO:0007669"/>
    <property type="project" value="TreeGrafter"/>
</dbReference>
<dbReference type="GO" id="GO:0003677">
    <property type="term" value="F:DNA binding"/>
    <property type="evidence" value="ECO:0007669"/>
    <property type="project" value="UniProtKB-UniRule"/>
</dbReference>
<dbReference type="Gene3D" id="3.30.1310.10">
    <property type="entry name" value="Nucleoid-associated protein YbaB-like domain"/>
    <property type="match status" value="1"/>
</dbReference>
<dbReference type="HAMAP" id="MF_00274">
    <property type="entry name" value="DNA_YbaB_EbfC"/>
    <property type="match status" value="1"/>
</dbReference>
<dbReference type="InterPro" id="IPR036894">
    <property type="entry name" value="YbaB-like_sf"/>
</dbReference>
<dbReference type="InterPro" id="IPR004401">
    <property type="entry name" value="YbaB/EbfC"/>
</dbReference>
<dbReference type="NCBIfam" id="TIGR00103">
    <property type="entry name" value="DNA_YbaB_EbfC"/>
    <property type="match status" value="1"/>
</dbReference>
<dbReference type="PANTHER" id="PTHR33449">
    <property type="entry name" value="NUCLEOID-ASSOCIATED PROTEIN YBAB"/>
    <property type="match status" value="1"/>
</dbReference>
<dbReference type="PANTHER" id="PTHR33449:SF1">
    <property type="entry name" value="NUCLEOID-ASSOCIATED PROTEIN YBAB"/>
    <property type="match status" value="1"/>
</dbReference>
<dbReference type="Pfam" id="PF02575">
    <property type="entry name" value="YbaB_DNA_bd"/>
    <property type="match status" value="1"/>
</dbReference>
<dbReference type="PIRSF" id="PIRSF004555">
    <property type="entry name" value="UCP004555"/>
    <property type="match status" value="1"/>
</dbReference>
<dbReference type="SUPFAM" id="SSF82607">
    <property type="entry name" value="YbaB-like"/>
    <property type="match status" value="1"/>
</dbReference>
<organism>
    <name type="scientific">Streptococcus pyogenes serotype M12 (strain MGAS9429)</name>
    <dbReference type="NCBI Taxonomy" id="370551"/>
    <lineage>
        <taxon>Bacteria</taxon>
        <taxon>Bacillati</taxon>
        <taxon>Bacillota</taxon>
        <taxon>Bacilli</taxon>
        <taxon>Lactobacillales</taxon>
        <taxon>Streptococcaceae</taxon>
        <taxon>Streptococcus</taxon>
    </lineage>
</organism>
<feature type="chain" id="PRO_1000003839" description="Nucleoid-associated protein MGAS9429_Spy1585">
    <location>
        <begin position="1"/>
        <end position="99"/>
    </location>
</feature>
<comment type="function">
    <text evidence="1">Binds to DNA and alters its conformation. May be involved in regulation of gene expression, nucleoid organization and DNA protection.</text>
</comment>
<comment type="subunit">
    <text evidence="1">Homodimer.</text>
</comment>
<comment type="subcellular location">
    <subcellularLocation>
        <location evidence="1">Cytoplasm</location>
        <location evidence="1">Nucleoid</location>
    </subcellularLocation>
</comment>
<comment type="similarity">
    <text evidence="1">Belongs to the YbaB/EbfC family.</text>
</comment>
<proteinExistence type="inferred from homology"/>
<sequence length="99" mass="10946">MMNMQNMMKQAQKLQKQMEQKQADLAAMQFTGKSAQDLVTATFTGDKKLVGIDFKEAVVDPEDVETLQDMTTQAINDALTQIDEATKKTLGAFAGKLPF</sequence>
<keyword id="KW-0963">Cytoplasm</keyword>
<keyword id="KW-0238">DNA-binding</keyword>
<gene>
    <name type="ordered locus">MGAS9429_Spy1585</name>
</gene>
<name>Y1585_STRPC</name>